<feature type="initiator methionine" description="Removed" evidence="2">
    <location>
        <position position="1"/>
    </location>
</feature>
<feature type="chain" id="PRO_0000137408" description="Eukaryotic translation initiation factor 2 subunit 2">
    <location>
        <begin position="2"/>
        <end position="333"/>
    </location>
</feature>
<feature type="zinc finger region" description="C4-type" evidence="5">
    <location>
        <begin position="281"/>
        <end position="305"/>
    </location>
</feature>
<feature type="region of interest" description="Disordered" evidence="6">
    <location>
        <begin position="1"/>
        <end position="120"/>
    </location>
</feature>
<feature type="region of interest" description="Disordered" evidence="6">
    <location>
        <begin position="139"/>
        <end position="165"/>
    </location>
</feature>
<feature type="compositionally biased region" description="Basic residues" evidence="6">
    <location>
        <begin position="13"/>
        <end position="22"/>
    </location>
</feature>
<feature type="compositionally biased region" description="Basic and acidic residues" evidence="6">
    <location>
        <begin position="40"/>
        <end position="51"/>
    </location>
</feature>
<feature type="compositionally biased region" description="Basic and acidic residues" evidence="6">
    <location>
        <begin position="96"/>
        <end position="105"/>
    </location>
</feature>
<feature type="compositionally biased region" description="Acidic residues" evidence="6">
    <location>
        <begin position="106"/>
        <end position="118"/>
    </location>
</feature>
<feature type="compositionally biased region" description="Acidic residues" evidence="6">
    <location>
        <begin position="139"/>
        <end position="149"/>
    </location>
</feature>
<feature type="modified residue" description="N-acetylserine" evidence="2">
    <location>
        <position position="2"/>
    </location>
</feature>
<feature type="modified residue" description="Phosphoserine" evidence="2">
    <location>
        <position position="2"/>
    </location>
</feature>
<feature type="modified residue" description="Phosphoserine; by PKC; in vitro" evidence="7">
    <location>
        <position position="13"/>
    </location>
</feature>
<feature type="modified residue" description="Phosphothreonine" evidence="2">
    <location>
        <position position="36"/>
    </location>
</feature>
<feature type="modified residue" description="Phosphoserine; by CK2" evidence="7">
    <location>
        <position position="67"/>
    </location>
</feature>
<feature type="modified residue" description="Phosphoserine" evidence="2">
    <location>
        <position position="158"/>
    </location>
</feature>
<feature type="modified residue" description="Phosphoserine; by PKA; in vitro" evidence="7">
    <location>
        <position position="218"/>
    </location>
</feature>
<feature type="modified residue" description="N6-acetyllysine" evidence="2">
    <location>
        <position position="265"/>
    </location>
</feature>
<feature type="modified residue" description="N6-acetyllysine" evidence="2">
    <location>
        <position position="293"/>
    </location>
</feature>
<feature type="cross-link" description="Glycyl lysine isopeptide (Lys-Gly) (interchain with G-Cter in SUMO2)" evidence="2">
    <location>
        <position position="102"/>
    </location>
</feature>
<proteinExistence type="evidence at protein level"/>
<sequence length="333" mass="38326">MSGDEMIFDPTMSKKKKKKKKPFMLDEEGDAQTEETQPLETKEVEPEPTEDKDVEADEEDSRKKDASDDLDDLNFFNQKKKKKKTKKIFDIDEAEEGVKDLKIENDVQEPAEPEDDLDIMLGNKKKKKKNVKFPDEDEILEKDEALEDEDSKKDDGISFSNQTGPAWAGSERDYTYEELLNRVFNIMREKNPDMVAGEKRKFVMKPPQVVRVGTKKTSFVNFTDICKLLHRQPKHLLAFLLAELGTSGSIDGNNQLVIKGRFQQKQIENVLRRYIKEYVTCHTCRSPDTILQKDTRLYFLQCETCHSRCSVASIKTGFQAVTGKRAQLRAKAN</sequence>
<accession>P41035</accession>
<evidence type="ECO:0000250" key="1">
    <source>
        <dbReference type="UniProtKB" id="P05198"/>
    </source>
</evidence>
<evidence type="ECO:0000250" key="2">
    <source>
        <dbReference type="UniProtKB" id="P20042"/>
    </source>
</evidence>
<evidence type="ECO:0000250" key="3">
    <source>
        <dbReference type="UniProtKB" id="P56329"/>
    </source>
</evidence>
<evidence type="ECO:0000250" key="4">
    <source>
        <dbReference type="UniProtKB" id="Q99L45"/>
    </source>
</evidence>
<evidence type="ECO:0000255" key="5"/>
<evidence type="ECO:0000256" key="6">
    <source>
        <dbReference type="SAM" id="MobiDB-lite"/>
    </source>
</evidence>
<evidence type="ECO:0000269" key="7">
    <source>
    </source>
</evidence>
<evidence type="ECO:0000305" key="8"/>
<name>IF2B_RABIT</name>
<gene>
    <name type="primary">EIF2S2</name>
    <name type="synonym">EIF2B</name>
</gene>
<dbReference type="EMBL" id="X73836">
    <property type="protein sequence ID" value="CAA52058.1"/>
    <property type="molecule type" value="mRNA"/>
</dbReference>
<dbReference type="PIR" id="JC2329">
    <property type="entry name" value="JC2329"/>
</dbReference>
<dbReference type="PIR" id="S13147">
    <property type="entry name" value="S13147"/>
</dbReference>
<dbReference type="PIR" id="S17871">
    <property type="entry name" value="S17871"/>
</dbReference>
<dbReference type="RefSeq" id="NP_001075867.1">
    <property type="nucleotide sequence ID" value="NM_001082398.2"/>
</dbReference>
<dbReference type="SMR" id="P41035"/>
<dbReference type="FunCoup" id="P41035">
    <property type="interactions" value="2379"/>
</dbReference>
<dbReference type="STRING" id="9986.ENSOCUP00000000420"/>
<dbReference type="iPTMnet" id="P41035"/>
<dbReference type="PaxDb" id="9986-ENSOCUP00000000420"/>
<dbReference type="Ensembl" id="ENSOCUT00000000482.4">
    <property type="protein sequence ID" value="ENSOCUP00000000420.3"/>
    <property type="gene ID" value="ENSOCUG00000000481.4"/>
</dbReference>
<dbReference type="GeneID" id="100009285"/>
<dbReference type="KEGG" id="ocu:100009285"/>
<dbReference type="CTD" id="8894"/>
<dbReference type="eggNOG" id="KOG2768">
    <property type="taxonomic scope" value="Eukaryota"/>
</dbReference>
<dbReference type="GeneTree" id="ENSGT00390000001804"/>
<dbReference type="HOGENOM" id="CLU_026663_0_1_1"/>
<dbReference type="InParanoid" id="P41035"/>
<dbReference type="OMA" id="CMREGNK"/>
<dbReference type="OrthoDB" id="10255414at2759"/>
<dbReference type="Proteomes" id="UP000001811">
    <property type="component" value="Chromosome 4"/>
</dbReference>
<dbReference type="Bgee" id="ENSOCUG00000000481">
    <property type="expression patterns" value="Expressed in autopod skin and 15 other cell types or tissues"/>
</dbReference>
<dbReference type="GO" id="GO:0005829">
    <property type="term" value="C:cytosol"/>
    <property type="evidence" value="ECO:0007669"/>
    <property type="project" value="UniProtKB-SubCell"/>
</dbReference>
<dbReference type="GO" id="GO:0005850">
    <property type="term" value="C:eukaryotic translation initiation factor 2 complex"/>
    <property type="evidence" value="ECO:0000250"/>
    <property type="project" value="UniProtKB"/>
</dbReference>
<dbReference type="GO" id="GO:0045202">
    <property type="term" value="C:synapse"/>
    <property type="evidence" value="ECO:0007669"/>
    <property type="project" value="Ensembl"/>
</dbReference>
<dbReference type="GO" id="GO:0003729">
    <property type="term" value="F:mRNA binding"/>
    <property type="evidence" value="ECO:0007669"/>
    <property type="project" value="TreeGrafter"/>
</dbReference>
<dbReference type="GO" id="GO:0003743">
    <property type="term" value="F:translation initiation factor activity"/>
    <property type="evidence" value="ECO:0000250"/>
    <property type="project" value="UniProtKB"/>
</dbReference>
<dbReference type="GO" id="GO:0031369">
    <property type="term" value="F:translation initiation factor binding"/>
    <property type="evidence" value="ECO:0007669"/>
    <property type="project" value="TreeGrafter"/>
</dbReference>
<dbReference type="GO" id="GO:0008270">
    <property type="term" value="F:zinc ion binding"/>
    <property type="evidence" value="ECO:0007669"/>
    <property type="project" value="UniProtKB-KW"/>
</dbReference>
<dbReference type="GO" id="GO:0002183">
    <property type="term" value="P:cytoplasmic translational initiation"/>
    <property type="evidence" value="ECO:0000250"/>
    <property type="project" value="UniProtKB"/>
</dbReference>
<dbReference type="GO" id="GO:0001731">
    <property type="term" value="P:formation of translation preinitiation complex"/>
    <property type="evidence" value="ECO:0007669"/>
    <property type="project" value="TreeGrafter"/>
</dbReference>
<dbReference type="GO" id="GO:0001701">
    <property type="term" value="P:in utero embryonic development"/>
    <property type="evidence" value="ECO:0007669"/>
    <property type="project" value="Ensembl"/>
</dbReference>
<dbReference type="GO" id="GO:0002176">
    <property type="term" value="P:male germ cell proliferation"/>
    <property type="evidence" value="ECO:0007669"/>
    <property type="project" value="Ensembl"/>
</dbReference>
<dbReference type="GO" id="GO:0008584">
    <property type="term" value="P:male gonad development"/>
    <property type="evidence" value="ECO:0007669"/>
    <property type="project" value="Ensembl"/>
</dbReference>
<dbReference type="FunFam" id="3.30.30.170:FF:000001">
    <property type="entry name" value="Eukaryotic translation initiation factor 2 subunit"/>
    <property type="match status" value="1"/>
</dbReference>
<dbReference type="Gene3D" id="3.30.30.170">
    <property type="match status" value="1"/>
</dbReference>
<dbReference type="InterPro" id="IPR045196">
    <property type="entry name" value="IF2/IF5"/>
</dbReference>
<dbReference type="InterPro" id="IPR002735">
    <property type="entry name" value="Transl_init_fac_IF2/IF5_dom"/>
</dbReference>
<dbReference type="InterPro" id="IPR016189">
    <property type="entry name" value="Transl_init_fac_IF2/IF5_N"/>
</dbReference>
<dbReference type="InterPro" id="IPR016190">
    <property type="entry name" value="Transl_init_fac_IF2/IF5_Zn-bd"/>
</dbReference>
<dbReference type="PANTHER" id="PTHR23001">
    <property type="entry name" value="EUKARYOTIC TRANSLATION INITIATION FACTOR"/>
    <property type="match status" value="1"/>
</dbReference>
<dbReference type="PANTHER" id="PTHR23001:SF3">
    <property type="entry name" value="EUKARYOTIC TRANSLATION INITIATION FACTOR 2 SUBUNIT 2"/>
    <property type="match status" value="1"/>
</dbReference>
<dbReference type="Pfam" id="PF01873">
    <property type="entry name" value="eIF-5_eIF-2B"/>
    <property type="match status" value="1"/>
</dbReference>
<dbReference type="SMART" id="SM00653">
    <property type="entry name" value="eIF2B_5"/>
    <property type="match status" value="1"/>
</dbReference>
<dbReference type="SUPFAM" id="SSF100966">
    <property type="entry name" value="Translation initiation factor 2 beta, aIF2beta, N-terminal domain"/>
    <property type="match status" value="1"/>
</dbReference>
<dbReference type="SUPFAM" id="SSF75689">
    <property type="entry name" value="Zinc-binding domain of translation initiation factor 2 beta"/>
    <property type="match status" value="1"/>
</dbReference>
<organism>
    <name type="scientific">Oryctolagus cuniculus</name>
    <name type="common">Rabbit</name>
    <dbReference type="NCBI Taxonomy" id="9986"/>
    <lineage>
        <taxon>Eukaryota</taxon>
        <taxon>Metazoa</taxon>
        <taxon>Chordata</taxon>
        <taxon>Craniata</taxon>
        <taxon>Vertebrata</taxon>
        <taxon>Euteleostomi</taxon>
        <taxon>Mammalia</taxon>
        <taxon>Eutheria</taxon>
        <taxon>Euarchontoglires</taxon>
        <taxon>Glires</taxon>
        <taxon>Lagomorpha</taxon>
        <taxon>Leporidae</taxon>
        <taxon>Oryctolagus</taxon>
    </lineage>
</organism>
<comment type="function">
    <text evidence="1">Component of the eIF2 complex that functions in the early steps of protein synthesis by forming a ternary complex with GTP and initiator tRNA. This complex binds to a 40S ribosomal subunit, followed by mRNA binding to form the 43S pre-initiation complex (43S PIC). Junction of the 60S ribosomal subunit to form the 80S initiation complex is preceded by hydrolysis of the GTP bound to eIF2 and release of an eIF2-GDP binary complex. In order for eIF2 to recycle and catalyze another round of initiation, the GDP bound to eIF2 must exchange with GTP by way of a reaction catalyzed by eIF2B.</text>
</comment>
<comment type="subunit">
    <text evidence="2 4">Eukaryotic translation initiation factor 2 eIF2 is a heterotrimeric complex composed of an alpha (EIF2S1), a beta (EIF2S2) and a gamma (EIF2S3) chain (By similarity). eIF2 is member of the 43S pre-initiation complex (43S PIC). eIF2 forms a complex with at least CELF1/CUGBP1, CALR, CALR3, EIF2S1, EIF2S2, HSP90B1 and HSPA5 (By similarity). Interacts with BZW2/5MP1 (By similarity). Interacts with EIF5 (By similarity).</text>
</comment>
<comment type="subcellular location">
    <subcellularLocation>
        <location evidence="3">Cytoplasm</location>
        <location evidence="3">Cytosol</location>
    </subcellularLocation>
</comment>
<comment type="PTM">
    <text>The N-terminus is blocked.</text>
</comment>
<comment type="similarity">
    <text evidence="8">Belongs to the eIF-2-beta/eIF-5 family.</text>
</comment>
<keyword id="KW-0007">Acetylation</keyword>
<keyword id="KW-0963">Cytoplasm</keyword>
<keyword id="KW-0903">Direct protein sequencing</keyword>
<keyword id="KW-0396">Initiation factor</keyword>
<keyword id="KW-1017">Isopeptide bond</keyword>
<keyword id="KW-0479">Metal-binding</keyword>
<keyword id="KW-0597">Phosphoprotein</keyword>
<keyword id="KW-0648">Protein biosynthesis</keyword>
<keyword id="KW-1185">Reference proteome</keyword>
<keyword id="KW-0832">Ubl conjugation</keyword>
<keyword id="KW-0862">Zinc</keyword>
<keyword id="KW-0863">Zinc-finger</keyword>
<protein>
    <recommendedName>
        <fullName>Eukaryotic translation initiation factor 2 subunit 2</fullName>
    </recommendedName>
    <alternativeName>
        <fullName>Eukaryotic translation initiation factor 2 subunit beta</fullName>
        <shortName>eIF2-beta</shortName>
    </alternativeName>
</protein>
<reference key="1">
    <citation type="journal article" date="1990" name="Biochim. Biophys. Acta">
        <title>Characterization of protein synthesis factors from rabbit reticulocytes.</title>
        <authorList>
            <person name="Merrick W.C."/>
            <person name="Dever T.E."/>
            <person name="Kinzy T.G."/>
            <person name="Conroy S.C."/>
            <person name="Cavallius J."/>
            <person name="Owens C.L."/>
        </authorList>
    </citation>
    <scope>NUCLEOTIDE SEQUENCE [MRNA]</scope>
</reference>
<reference key="2">
    <citation type="journal article" date="1993" name="Biochim. Biophys. Acta">
        <title>Cloning of cDNA for the beta-subunit of rabbit translation initiation factor-2 using PCR.</title>
        <authorList>
            <person name="Price N.T."/>
            <person name="Hall L."/>
            <person name="Proud C.G."/>
        </authorList>
    </citation>
    <scope>NUCLEOTIDE SEQUENCE [MRNA]</scope>
    <source>
        <strain>New Zealand white</strain>
    </source>
</reference>
<reference key="3">
    <citation type="journal article" date="1991" name="Biochim. Biophys. Acta">
        <title>Amino acid sequence analysis of the beta- and gamma-subunits of eukaryotic initiation factor eIF-2. Identification of regions interacting with GTP.</title>
        <authorList>
            <person name="Bommer U.-A."/>
            <person name="Kraft R."/>
            <person name="Kurzchalia T.V."/>
            <person name="Price N.T."/>
            <person name="Proud C.G."/>
        </authorList>
    </citation>
    <scope>PROTEIN SEQUENCE OF 25-39; 122-136 AND 195-218</scope>
    <source>
        <tissue>Reticulocyte</tissue>
    </source>
</reference>
<reference key="4">
    <citation type="journal article" date="1987" name="Arch. Biochem. Biophys.">
        <title>The purification and characterization of subunits alpha, beta, and gamma from the rabbit reticulocyte eukaryotic initiation factor 2.</title>
        <authorList>
            <person name="Schafer M.P."/>
            <person name="Fairwell T."/>
            <person name="Parker D.S."/>
            <person name="Knight M."/>
            <person name="Anderson W.F."/>
            <person name="Safer B."/>
        </authorList>
    </citation>
    <scope>CHARACTERIZATION</scope>
    <source>
        <tissue>Reticulocyte</tissue>
    </source>
</reference>
<reference key="5">
    <citation type="journal article" date="1994" name="Biochem. Biophys. Res. Commun.">
        <title>Identification of novel phosphorylation sites in the beta-subunit of translation initiation factor eIF-2.</title>
        <authorList>
            <person name="Welsh G.I."/>
            <person name="Price N.T."/>
            <person name="Bladergroen B.A."/>
            <person name="Bloomberg G."/>
            <person name="Proud C.G."/>
        </authorList>
    </citation>
    <scope>PHOSPHORYLATION AT SER-2; SER-13; SER-67 AND SER-218</scope>
</reference>